<keyword id="KW-0963">Cytoplasm</keyword>
<keyword id="KW-0489">Methyltransferase</keyword>
<keyword id="KW-1185">Reference proteome</keyword>
<keyword id="KW-0698">rRNA processing</keyword>
<keyword id="KW-0949">S-adenosyl-L-methionine</keyword>
<keyword id="KW-0808">Transferase</keyword>
<dbReference type="EC" id="2.1.1.199" evidence="1"/>
<dbReference type="EMBL" id="AL954747">
    <property type="protein sequence ID" value="CAD84894.1"/>
    <property type="molecule type" value="Genomic_DNA"/>
</dbReference>
<dbReference type="RefSeq" id="WP_011111592.1">
    <property type="nucleotide sequence ID" value="NC_004757.1"/>
</dbReference>
<dbReference type="SMR" id="Q82VT1"/>
<dbReference type="STRING" id="228410.NE0983"/>
<dbReference type="GeneID" id="87104174"/>
<dbReference type="KEGG" id="neu:NE0983"/>
<dbReference type="eggNOG" id="COG0275">
    <property type="taxonomic scope" value="Bacteria"/>
</dbReference>
<dbReference type="HOGENOM" id="CLU_038422_2_0_4"/>
<dbReference type="OrthoDB" id="9806637at2"/>
<dbReference type="PhylomeDB" id="Q82VT1"/>
<dbReference type="Proteomes" id="UP000001416">
    <property type="component" value="Chromosome"/>
</dbReference>
<dbReference type="GO" id="GO:0005737">
    <property type="term" value="C:cytoplasm"/>
    <property type="evidence" value="ECO:0007669"/>
    <property type="project" value="UniProtKB-SubCell"/>
</dbReference>
<dbReference type="GO" id="GO:0071424">
    <property type="term" value="F:rRNA (cytosine-N4-)-methyltransferase activity"/>
    <property type="evidence" value="ECO:0007669"/>
    <property type="project" value="UniProtKB-UniRule"/>
</dbReference>
<dbReference type="GO" id="GO:0070475">
    <property type="term" value="P:rRNA base methylation"/>
    <property type="evidence" value="ECO:0007669"/>
    <property type="project" value="UniProtKB-UniRule"/>
</dbReference>
<dbReference type="Gene3D" id="1.10.150.170">
    <property type="entry name" value="Putative methyltransferase TM0872, insert domain"/>
    <property type="match status" value="1"/>
</dbReference>
<dbReference type="Gene3D" id="3.40.50.150">
    <property type="entry name" value="Vaccinia Virus protein VP39"/>
    <property type="match status" value="1"/>
</dbReference>
<dbReference type="HAMAP" id="MF_01007">
    <property type="entry name" value="16SrRNA_methyltr_H"/>
    <property type="match status" value="1"/>
</dbReference>
<dbReference type="InterPro" id="IPR002903">
    <property type="entry name" value="RsmH"/>
</dbReference>
<dbReference type="InterPro" id="IPR023397">
    <property type="entry name" value="SAM-dep_MeTrfase_MraW_recog"/>
</dbReference>
<dbReference type="InterPro" id="IPR029063">
    <property type="entry name" value="SAM-dependent_MTases_sf"/>
</dbReference>
<dbReference type="NCBIfam" id="TIGR00006">
    <property type="entry name" value="16S rRNA (cytosine(1402)-N(4))-methyltransferase RsmH"/>
    <property type="match status" value="1"/>
</dbReference>
<dbReference type="PANTHER" id="PTHR11265:SF0">
    <property type="entry name" value="12S RRNA N4-METHYLCYTIDINE METHYLTRANSFERASE"/>
    <property type="match status" value="1"/>
</dbReference>
<dbReference type="PANTHER" id="PTHR11265">
    <property type="entry name" value="S-ADENOSYL-METHYLTRANSFERASE MRAW"/>
    <property type="match status" value="1"/>
</dbReference>
<dbReference type="Pfam" id="PF01795">
    <property type="entry name" value="Methyltransf_5"/>
    <property type="match status" value="1"/>
</dbReference>
<dbReference type="PIRSF" id="PIRSF004486">
    <property type="entry name" value="MraW"/>
    <property type="match status" value="1"/>
</dbReference>
<dbReference type="SUPFAM" id="SSF81799">
    <property type="entry name" value="Putative methyltransferase TM0872, insert domain"/>
    <property type="match status" value="1"/>
</dbReference>
<dbReference type="SUPFAM" id="SSF53335">
    <property type="entry name" value="S-adenosyl-L-methionine-dependent methyltransferases"/>
    <property type="match status" value="1"/>
</dbReference>
<reference key="1">
    <citation type="journal article" date="2003" name="J. Bacteriol.">
        <title>Complete genome sequence of the ammonia-oxidizing bacterium and obligate chemolithoautotroph Nitrosomonas europaea.</title>
        <authorList>
            <person name="Chain P."/>
            <person name="Lamerdin J.E."/>
            <person name="Larimer F.W."/>
            <person name="Regala W."/>
            <person name="Lao V."/>
            <person name="Land M.L."/>
            <person name="Hauser L."/>
            <person name="Hooper A.B."/>
            <person name="Klotz M.G."/>
            <person name="Norton J."/>
            <person name="Sayavedra-Soto L.A."/>
            <person name="Arciero D.M."/>
            <person name="Hommes N.G."/>
            <person name="Whittaker M.M."/>
            <person name="Arp D.J."/>
        </authorList>
    </citation>
    <scope>NUCLEOTIDE SEQUENCE [LARGE SCALE GENOMIC DNA]</scope>
    <source>
        <strain>ATCC 19718 / CIP 103999 / KCTC 2705 / NBRC 14298</strain>
    </source>
</reference>
<sequence length="317" mass="35255">MHVPVLLEEAADALNIRADGIYVDATFGRGGHSRLILSRLGESGRLIAFDKDPAAISAARSIRDERFQAVHGSYAQIRTALESLSVSRIDGILLDLGVSSIQLDEASRGFSFRHDGPLDMRMDSSRGKTAAEWLATVTETELKEVIRTYGEERYAGQIAGAIVMAQTRQPIVTTFQLAEIVAAVVRKFGHRDGRQHPATRTFQAIRIHLNQELEELSVTLPQCVELLNANGRLVVISFHSLEDRIVKRFMRMQAGTDTLPRKLPVRDEESRMHSRQTLQIIGKKIRPGENEVAANPRARSAVMRVAEKLETGSKVDR</sequence>
<proteinExistence type="inferred from homology"/>
<comment type="function">
    <text evidence="1">Specifically methylates the N4 position of cytidine in position 1402 (C1402) of 16S rRNA.</text>
</comment>
<comment type="catalytic activity">
    <reaction evidence="1">
        <text>cytidine(1402) in 16S rRNA + S-adenosyl-L-methionine = N(4)-methylcytidine(1402) in 16S rRNA + S-adenosyl-L-homocysteine + H(+)</text>
        <dbReference type="Rhea" id="RHEA:42928"/>
        <dbReference type="Rhea" id="RHEA-COMP:10286"/>
        <dbReference type="Rhea" id="RHEA-COMP:10287"/>
        <dbReference type="ChEBI" id="CHEBI:15378"/>
        <dbReference type="ChEBI" id="CHEBI:57856"/>
        <dbReference type="ChEBI" id="CHEBI:59789"/>
        <dbReference type="ChEBI" id="CHEBI:74506"/>
        <dbReference type="ChEBI" id="CHEBI:82748"/>
        <dbReference type="EC" id="2.1.1.199"/>
    </reaction>
</comment>
<comment type="subcellular location">
    <subcellularLocation>
        <location evidence="1">Cytoplasm</location>
    </subcellularLocation>
</comment>
<comment type="similarity">
    <text evidence="1">Belongs to the methyltransferase superfamily. RsmH family.</text>
</comment>
<organism>
    <name type="scientific">Nitrosomonas europaea (strain ATCC 19718 / CIP 103999 / KCTC 2705 / NBRC 14298)</name>
    <dbReference type="NCBI Taxonomy" id="228410"/>
    <lineage>
        <taxon>Bacteria</taxon>
        <taxon>Pseudomonadati</taxon>
        <taxon>Pseudomonadota</taxon>
        <taxon>Betaproteobacteria</taxon>
        <taxon>Nitrosomonadales</taxon>
        <taxon>Nitrosomonadaceae</taxon>
        <taxon>Nitrosomonas</taxon>
    </lineage>
</organism>
<gene>
    <name evidence="1" type="primary">rsmH</name>
    <name type="synonym">mraW</name>
    <name type="ordered locus">NE0983</name>
</gene>
<evidence type="ECO:0000255" key="1">
    <source>
        <dbReference type="HAMAP-Rule" id="MF_01007"/>
    </source>
</evidence>
<name>RSMH_NITEU</name>
<accession>Q82VT1</accession>
<feature type="chain" id="PRO_0000108672" description="Ribosomal RNA small subunit methyltransferase H">
    <location>
        <begin position="1"/>
        <end position="317"/>
    </location>
</feature>
<feature type="binding site" evidence="1">
    <location>
        <begin position="30"/>
        <end position="32"/>
    </location>
    <ligand>
        <name>S-adenosyl-L-methionine</name>
        <dbReference type="ChEBI" id="CHEBI:59789"/>
    </ligand>
</feature>
<feature type="binding site" evidence="1">
    <location>
        <position position="50"/>
    </location>
    <ligand>
        <name>S-adenosyl-L-methionine</name>
        <dbReference type="ChEBI" id="CHEBI:59789"/>
    </ligand>
</feature>
<feature type="binding site" evidence="1">
    <location>
        <position position="74"/>
    </location>
    <ligand>
        <name>S-adenosyl-L-methionine</name>
        <dbReference type="ChEBI" id="CHEBI:59789"/>
    </ligand>
</feature>
<feature type="binding site" evidence="1">
    <location>
        <position position="95"/>
    </location>
    <ligand>
        <name>S-adenosyl-L-methionine</name>
        <dbReference type="ChEBI" id="CHEBI:59789"/>
    </ligand>
</feature>
<feature type="binding site" evidence="1">
    <location>
        <position position="102"/>
    </location>
    <ligand>
        <name>S-adenosyl-L-methionine</name>
        <dbReference type="ChEBI" id="CHEBI:59789"/>
    </ligand>
</feature>
<protein>
    <recommendedName>
        <fullName evidence="1">Ribosomal RNA small subunit methyltransferase H</fullName>
        <ecNumber evidence="1">2.1.1.199</ecNumber>
    </recommendedName>
    <alternativeName>
        <fullName evidence="1">16S rRNA m(4)C1402 methyltransferase</fullName>
    </alternativeName>
    <alternativeName>
        <fullName evidence="1">rRNA (cytosine-N(4)-)-methyltransferase RsmH</fullName>
    </alternativeName>
</protein>